<reference key="1">
    <citation type="journal article" date="1992" name="Science">
        <title>Carnivorous plants: phylogeny and structural evolution.</title>
        <authorList>
            <person name="Albert V.A."/>
            <person name="Williams S.E."/>
            <person name="Chase M.W."/>
        </authorList>
    </citation>
    <scope>NUCLEOTIDE SEQUENCE [GENOMIC DNA]</scope>
</reference>
<accession>P28429</accession>
<gene>
    <name evidence="1" type="primary">rbcL</name>
</gene>
<organism>
    <name type="scientific">Lobelia sp</name>
    <dbReference type="NCBI Taxonomy" id="4383"/>
    <lineage>
        <taxon>Eukaryota</taxon>
        <taxon>Viridiplantae</taxon>
        <taxon>Streptophyta</taxon>
        <taxon>Embryophyta</taxon>
        <taxon>Tracheophyta</taxon>
        <taxon>Spermatophyta</taxon>
        <taxon>Magnoliopsida</taxon>
        <taxon>eudicotyledons</taxon>
        <taxon>Gunneridae</taxon>
        <taxon>Pentapetalae</taxon>
        <taxon>asterids</taxon>
        <taxon>campanulids</taxon>
        <taxon>Asterales</taxon>
        <taxon>Campanulaceae</taxon>
        <taxon>Lobelia</taxon>
    </lineage>
</organism>
<feature type="chain" id="PRO_0000062504" description="Ribulose bisphosphate carboxylase large chain">
    <location>
        <begin position="1" status="less than"/>
        <end position="466"/>
    </location>
</feature>
<feature type="active site" description="Proton acceptor" evidence="1">
    <location>
        <position position="166"/>
    </location>
</feature>
<feature type="active site" description="Proton acceptor" evidence="1">
    <location>
        <position position="285"/>
    </location>
</feature>
<feature type="binding site" description="in homodimeric partner" evidence="1">
    <location>
        <position position="114"/>
    </location>
    <ligand>
        <name>substrate</name>
    </ligand>
</feature>
<feature type="binding site" evidence="1">
    <location>
        <position position="164"/>
    </location>
    <ligand>
        <name>substrate</name>
    </ligand>
</feature>
<feature type="binding site" evidence="1">
    <location>
        <position position="168"/>
    </location>
    <ligand>
        <name>substrate</name>
    </ligand>
</feature>
<feature type="binding site" description="via carbamate group" evidence="1">
    <location>
        <position position="192"/>
    </location>
    <ligand>
        <name>Mg(2+)</name>
        <dbReference type="ChEBI" id="CHEBI:18420"/>
    </ligand>
</feature>
<feature type="binding site" evidence="1">
    <location>
        <position position="194"/>
    </location>
    <ligand>
        <name>Mg(2+)</name>
        <dbReference type="ChEBI" id="CHEBI:18420"/>
    </ligand>
</feature>
<feature type="binding site" evidence="1">
    <location>
        <position position="195"/>
    </location>
    <ligand>
        <name>Mg(2+)</name>
        <dbReference type="ChEBI" id="CHEBI:18420"/>
    </ligand>
</feature>
<feature type="binding site" evidence="1">
    <location>
        <position position="286"/>
    </location>
    <ligand>
        <name>substrate</name>
    </ligand>
</feature>
<feature type="binding site" evidence="1">
    <location>
        <position position="318"/>
    </location>
    <ligand>
        <name>substrate</name>
    </ligand>
</feature>
<feature type="binding site" evidence="1">
    <location>
        <position position="370"/>
    </location>
    <ligand>
        <name>substrate</name>
    </ligand>
</feature>
<feature type="site" description="Transition state stabilizer" evidence="1">
    <location>
        <position position="325"/>
    </location>
</feature>
<feature type="modified residue" description="N6,N6,N6-trimethyllysine" evidence="1">
    <location>
        <position position="5"/>
    </location>
</feature>
<feature type="modified residue" description="N6-carboxylysine" evidence="1">
    <location>
        <position position="192"/>
    </location>
</feature>
<feature type="non-terminal residue">
    <location>
        <position position="1"/>
    </location>
</feature>
<geneLocation type="chloroplast"/>
<keyword id="KW-0113">Calvin cycle</keyword>
<keyword id="KW-0120">Carbon dioxide fixation</keyword>
<keyword id="KW-0150">Chloroplast</keyword>
<keyword id="KW-0456">Lyase</keyword>
<keyword id="KW-0460">Magnesium</keyword>
<keyword id="KW-0479">Metal-binding</keyword>
<keyword id="KW-0488">Methylation</keyword>
<keyword id="KW-0503">Monooxygenase</keyword>
<keyword id="KW-0560">Oxidoreductase</keyword>
<keyword id="KW-0601">Photorespiration</keyword>
<keyword id="KW-0602">Photosynthesis</keyword>
<keyword id="KW-0934">Plastid</keyword>
<protein>
    <recommendedName>
        <fullName evidence="1">Ribulose bisphosphate carboxylase large chain</fullName>
        <shortName evidence="1">RuBisCO large subunit</shortName>
        <ecNumber evidence="1">4.1.1.39</ecNumber>
    </recommendedName>
</protein>
<dbReference type="EC" id="4.1.1.39" evidence="1"/>
<dbReference type="EMBL" id="L01931">
    <property type="protein sequence ID" value="AAA82565.2"/>
    <property type="molecule type" value="Genomic_DNA"/>
</dbReference>
<dbReference type="GO" id="GO:0009507">
    <property type="term" value="C:chloroplast"/>
    <property type="evidence" value="ECO:0007669"/>
    <property type="project" value="UniProtKB-SubCell"/>
</dbReference>
<dbReference type="GO" id="GO:0000287">
    <property type="term" value="F:magnesium ion binding"/>
    <property type="evidence" value="ECO:0007669"/>
    <property type="project" value="InterPro"/>
</dbReference>
<dbReference type="GO" id="GO:0004497">
    <property type="term" value="F:monooxygenase activity"/>
    <property type="evidence" value="ECO:0007669"/>
    <property type="project" value="UniProtKB-KW"/>
</dbReference>
<dbReference type="GO" id="GO:0016984">
    <property type="term" value="F:ribulose-bisphosphate carboxylase activity"/>
    <property type="evidence" value="ECO:0007669"/>
    <property type="project" value="UniProtKB-EC"/>
</dbReference>
<dbReference type="GO" id="GO:0009853">
    <property type="term" value="P:photorespiration"/>
    <property type="evidence" value="ECO:0007669"/>
    <property type="project" value="UniProtKB-KW"/>
</dbReference>
<dbReference type="GO" id="GO:0019253">
    <property type="term" value="P:reductive pentose-phosphate cycle"/>
    <property type="evidence" value="ECO:0007669"/>
    <property type="project" value="UniProtKB-KW"/>
</dbReference>
<dbReference type="CDD" id="cd08212">
    <property type="entry name" value="RuBisCO_large_I"/>
    <property type="match status" value="1"/>
</dbReference>
<dbReference type="FunFam" id="3.20.20.110:FF:000001">
    <property type="entry name" value="Ribulose bisphosphate carboxylase large chain"/>
    <property type="match status" value="1"/>
</dbReference>
<dbReference type="FunFam" id="3.30.70.150:FF:000001">
    <property type="entry name" value="Ribulose bisphosphate carboxylase large chain"/>
    <property type="match status" value="1"/>
</dbReference>
<dbReference type="Gene3D" id="3.20.20.110">
    <property type="entry name" value="Ribulose bisphosphate carboxylase, large subunit, C-terminal domain"/>
    <property type="match status" value="1"/>
</dbReference>
<dbReference type="Gene3D" id="3.30.70.150">
    <property type="entry name" value="RuBisCO large subunit, N-terminal domain"/>
    <property type="match status" value="1"/>
</dbReference>
<dbReference type="HAMAP" id="MF_01338">
    <property type="entry name" value="RuBisCO_L_type1"/>
    <property type="match status" value="1"/>
</dbReference>
<dbReference type="InterPro" id="IPR033966">
    <property type="entry name" value="RuBisCO"/>
</dbReference>
<dbReference type="InterPro" id="IPR020878">
    <property type="entry name" value="RuBisCo_large_chain_AS"/>
</dbReference>
<dbReference type="InterPro" id="IPR000685">
    <property type="entry name" value="RuBisCO_lsu_C"/>
</dbReference>
<dbReference type="InterPro" id="IPR036376">
    <property type="entry name" value="RuBisCO_lsu_C_sf"/>
</dbReference>
<dbReference type="InterPro" id="IPR017443">
    <property type="entry name" value="RuBisCO_lsu_fd_N"/>
</dbReference>
<dbReference type="InterPro" id="IPR036422">
    <property type="entry name" value="RuBisCO_lsu_N_sf"/>
</dbReference>
<dbReference type="InterPro" id="IPR020888">
    <property type="entry name" value="RuBisCO_lsuI"/>
</dbReference>
<dbReference type="NCBIfam" id="NF003252">
    <property type="entry name" value="PRK04208.1"/>
    <property type="match status" value="1"/>
</dbReference>
<dbReference type="PANTHER" id="PTHR42704">
    <property type="entry name" value="RIBULOSE BISPHOSPHATE CARBOXYLASE"/>
    <property type="match status" value="1"/>
</dbReference>
<dbReference type="PANTHER" id="PTHR42704:SF15">
    <property type="entry name" value="RIBULOSE BISPHOSPHATE CARBOXYLASE LARGE CHAIN"/>
    <property type="match status" value="1"/>
</dbReference>
<dbReference type="Pfam" id="PF00016">
    <property type="entry name" value="RuBisCO_large"/>
    <property type="match status" value="1"/>
</dbReference>
<dbReference type="Pfam" id="PF02788">
    <property type="entry name" value="RuBisCO_large_N"/>
    <property type="match status" value="1"/>
</dbReference>
<dbReference type="SFLD" id="SFLDG01052">
    <property type="entry name" value="RuBisCO"/>
    <property type="match status" value="1"/>
</dbReference>
<dbReference type="SFLD" id="SFLDS00014">
    <property type="entry name" value="RuBisCO"/>
    <property type="match status" value="1"/>
</dbReference>
<dbReference type="SFLD" id="SFLDG00301">
    <property type="entry name" value="RuBisCO-like_proteins"/>
    <property type="match status" value="1"/>
</dbReference>
<dbReference type="SUPFAM" id="SSF51649">
    <property type="entry name" value="RuBisCo, C-terminal domain"/>
    <property type="match status" value="1"/>
</dbReference>
<dbReference type="SUPFAM" id="SSF54966">
    <property type="entry name" value="RuBisCO, large subunit, small (N-terminal) domain"/>
    <property type="match status" value="1"/>
</dbReference>
<dbReference type="PROSITE" id="PS00157">
    <property type="entry name" value="RUBISCO_LARGE"/>
    <property type="match status" value="1"/>
</dbReference>
<name>RBL_LOBSP</name>
<evidence type="ECO:0000255" key="1">
    <source>
        <dbReference type="HAMAP-Rule" id="MF_01338"/>
    </source>
</evidence>
<sequence>NVGLKAVFKDYKLTYYTPDYETKVTDILAAFRVTPQPGVPPEEAGAAVAXESSTGTWTTVWTDGLTSLDRYKGPCYHIEPVAGEENQFIAYVAYPLDLFEEGXVTNMFTSIVGNVFGFKALRALRLEDLRIPPAYVKTFQGPPHGIQVERDKLNKYGRPLLGCTIKPKLGLSAKNYGRAVYECLRGGLDFTKDDENVNSQPFMRWRDRFLFXXEALYKAQAETGEIKGHYLNXTAGTSEEMIKRAVFARELGVPIVMHDYLTGGFTSNTSLAHYCRDNGLLLHIHRAMHAVIDRQKNHGIHFRVLAKXLRMSGGDHIHSGTVVGKLEGEREITLGFVDLLRDDFIEKDRSRGIYFTQDWVSMPGVLPVRSGGIHVWHMPALTEIFGDDSVLQFGGGTLGHPWGNAPGRVANRVALEACVQARNEGRDLAREGNEIIRKAATWSPELSAACEVWKEIKFEFAAMDTL</sequence>
<proteinExistence type="inferred from homology"/>
<comment type="function">
    <text evidence="1">RuBisCO catalyzes two reactions: the carboxylation of D-ribulose 1,5-bisphosphate, the primary event in carbon dioxide fixation, as well as the oxidative fragmentation of the pentose substrate in the photorespiration process. Both reactions occur simultaneously and in competition at the same active site.</text>
</comment>
<comment type="catalytic activity">
    <reaction evidence="1">
        <text>2 (2R)-3-phosphoglycerate + 2 H(+) = D-ribulose 1,5-bisphosphate + CO2 + H2O</text>
        <dbReference type="Rhea" id="RHEA:23124"/>
        <dbReference type="ChEBI" id="CHEBI:15377"/>
        <dbReference type="ChEBI" id="CHEBI:15378"/>
        <dbReference type="ChEBI" id="CHEBI:16526"/>
        <dbReference type="ChEBI" id="CHEBI:57870"/>
        <dbReference type="ChEBI" id="CHEBI:58272"/>
        <dbReference type="EC" id="4.1.1.39"/>
    </reaction>
</comment>
<comment type="catalytic activity">
    <reaction evidence="1">
        <text>D-ribulose 1,5-bisphosphate + O2 = 2-phosphoglycolate + (2R)-3-phosphoglycerate + 2 H(+)</text>
        <dbReference type="Rhea" id="RHEA:36631"/>
        <dbReference type="ChEBI" id="CHEBI:15378"/>
        <dbReference type="ChEBI" id="CHEBI:15379"/>
        <dbReference type="ChEBI" id="CHEBI:57870"/>
        <dbReference type="ChEBI" id="CHEBI:58033"/>
        <dbReference type="ChEBI" id="CHEBI:58272"/>
    </reaction>
</comment>
<comment type="cofactor">
    <cofactor evidence="1">
        <name>Mg(2+)</name>
        <dbReference type="ChEBI" id="CHEBI:18420"/>
    </cofactor>
    <text evidence="1">Binds 1 Mg(2+) ion per subunit.</text>
</comment>
<comment type="subunit">
    <text evidence="1">Heterohexadecamer of 8 large chains and 8 small chains.</text>
</comment>
<comment type="subcellular location">
    <subcellularLocation>
        <location>Plastid</location>
        <location>Chloroplast</location>
    </subcellularLocation>
</comment>
<comment type="miscellaneous">
    <text evidence="1">The basic functional RuBisCO is composed of a large chain homodimer in a 'head-to-tail' conformation. In form I RuBisCO this homodimer is arranged in a barrel-like tetramer with the small subunits forming a tetrameric 'cap' on each end of the 'barrel'.</text>
</comment>
<comment type="similarity">
    <text evidence="1">Belongs to the RuBisCO large chain family. Type I subfamily.</text>
</comment>